<protein>
    <recommendedName>
        <fullName>Vacuolar protein sorting-associated protein 41</fullName>
    </recommendedName>
</protein>
<keyword id="KW-0653">Protein transport</keyword>
<keyword id="KW-1185">Reference proteome</keyword>
<keyword id="KW-0677">Repeat</keyword>
<keyword id="KW-0813">Transport</keyword>
<keyword id="KW-0853">WD repeat</keyword>
<accession>Q9P7N3</accession>
<dbReference type="EMBL" id="CU329670">
    <property type="protein sequence ID" value="CAB76026.2"/>
    <property type="molecule type" value="Genomic_DNA"/>
</dbReference>
<dbReference type="RefSeq" id="NP_593409.2">
    <property type="nucleotide sequence ID" value="NM_001018842.2"/>
</dbReference>
<dbReference type="SMR" id="Q9P7N3"/>
<dbReference type="FunCoup" id="Q9P7N3">
    <property type="interactions" value="336"/>
</dbReference>
<dbReference type="STRING" id="284812.Q9P7N3"/>
<dbReference type="iPTMnet" id="Q9P7N3"/>
<dbReference type="PaxDb" id="4896-SPAP27G11.05c.1"/>
<dbReference type="EnsemblFungi" id="SPAP27G11.05c.1">
    <property type="protein sequence ID" value="SPAP27G11.05c.1:pep"/>
    <property type="gene ID" value="SPAP27G11.05c"/>
</dbReference>
<dbReference type="GeneID" id="2542058"/>
<dbReference type="KEGG" id="spo:2542058"/>
<dbReference type="PomBase" id="SPAP27G11.05c">
    <property type="gene designation" value="vps41"/>
</dbReference>
<dbReference type="VEuPathDB" id="FungiDB:SPAP27G11.05c"/>
<dbReference type="eggNOG" id="KOG2066">
    <property type="taxonomic scope" value="Eukaryota"/>
</dbReference>
<dbReference type="HOGENOM" id="CLU_001285_2_2_1"/>
<dbReference type="InParanoid" id="Q9P7N3"/>
<dbReference type="OMA" id="PQLVWQD"/>
<dbReference type="PRO" id="PR:Q9P7N3"/>
<dbReference type="Proteomes" id="UP000002485">
    <property type="component" value="Chromosome I"/>
</dbReference>
<dbReference type="GO" id="GO:0005737">
    <property type="term" value="C:cytoplasm"/>
    <property type="evidence" value="ECO:0007005"/>
    <property type="project" value="PomBase"/>
</dbReference>
<dbReference type="GO" id="GO:0005829">
    <property type="term" value="C:cytosol"/>
    <property type="evidence" value="ECO:0007669"/>
    <property type="project" value="GOC"/>
</dbReference>
<dbReference type="GO" id="GO:0030897">
    <property type="term" value="C:HOPS complex"/>
    <property type="evidence" value="ECO:0000318"/>
    <property type="project" value="GO_Central"/>
</dbReference>
<dbReference type="GO" id="GO:0005770">
    <property type="term" value="C:late endosome"/>
    <property type="evidence" value="ECO:0000318"/>
    <property type="project" value="GO_Central"/>
</dbReference>
<dbReference type="GO" id="GO:0009267">
    <property type="term" value="P:cellular response to starvation"/>
    <property type="evidence" value="ECO:0000318"/>
    <property type="project" value="GO_Central"/>
</dbReference>
<dbReference type="GO" id="GO:0034058">
    <property type="term" value="P:endosomal vesicle fusion"/>
    <property type="evidence" value="ECO:0000318"/>
    <property type="project" value="GO_Central"/>
</dbReference>
<dbReference type="GO" id="GO:0006895">
    <property type="term" value="P:Golgi to endosome transport"/>
    <property type="evidence" value="ECO:0000250"/>
    <property type="project" value="PomBase"/>
</dbReference>
<dbReference type="GO" id="GO:0045324">
    <property type="term" value="P:late endosome to vacuole transport"/>
    <property type="evidence" value="ECO:0000250"/>
    <property type="project" value="PomBase"/>
</dbReference>
<dbReference type="GO" id="GO:0016236">
    <property type="term" value="P:macroautophagy"/>
    <property type="evidence" value="ECO:0000318"/>
    <property type="project" value="GO_Central"/>
</dbReference>
<dbReference type="GO" id="GO:0006623">
    <property type="term" value="P:protein targeting to vacuole"/>
    <property type="evidence" value="ECO:0000318"/>
    <property type="project" value="GO_Central"/>
</dbReference>
<dbReference type="GO" id="GO:0042144">
    <property type="term" value="P:vacuole fusion, non-autophagic"/>
    <property type="evidence" value="ECO:0000250"/>
    <property type="project" value="PomBase"/>
</dbReference>
<dbReference type="GO" id="GO:0048278">
    <property type="term" value="P:vesicle docking"/>
    <property type="evidence" value="ECO:0000250"/>
    <property type="project" value="PomBase"/>
</dbReference>
<dbReference type="Gene3D" id="1.25.40.10">
    <property type="entry name" value="Tetratricopeptide repeat domain"/>
    <property type="match status" value="1"/>
</dbReference>
<dbReference type="Gene3D" id="2.130.10.10">
    <property type="entry name" value="YVTN repeat-like/Quinoprotein amine dehydrogenase"/>
    <property type="match status" value="1"/>
</dbReference>
<dbReference type="InterPro" id="IPR000547">
    <property type="entry name" value="Clathrin_H-chain/VPS_repeat"/>
</dbReference>
<dbReference type="InterPro" id="IPR011990">
    <property type="entry name" value="TPR-like_helical_dom_sf"/>
</dbReference>
<dbReference type="InterPro" id="IPR016902">
    <property type="entry name" value="VPS41"/>
</dbReference>
<dbReference type="InterPro" id="IPR045111">
    <property type="entry name" value="Vps41/Vps8"/>
</dbReference>
<dbReference type="InterPro" id="IPR015943">
    <property type="entry name" value="WD40/YVTN_repeat-like_dom_sf"/>
</dbReference>
<dbReference type="InterPro" id="IPR036322">
    <property type="entry name" value="WD40_repeat_dom_sf"/>
</dbReference>
<dbReference type="PANTHER" id="PTHR12616">
    <property type="entry name" value="VACUOLAR PROTEIN SORTING VPS41"/>
    <property type="match status" value="1"/>
</dbReference>
<dbReference type="PANTHER" id="PTHR12616:SF1">
    <property type="entry name" value="VACUOLAR PROTEIN SORTING-ASSOCIATED PROTEIN 41 HOMOLOG"/>
    <property type="match status" value="1"/>
</dbReference>
<dbReference type="Pfam" id="PF23411">
    <property type="entry name" value="Beta-prop_Vps41"/>
    <property type="match status" value="1"/>
</dbReference>
<dbReference type="Pfam" id="PF23556">
    <property type="entry name" value="TPR_Vps41"/>
    <property type="match status" value="1"/>
</dbReference>
<dbReference type="PIRSF" id="PIRSF028921">
    <property type="entry name" value="VPS41"/>
    <property type="match status" value="1"/>
</dbReference>
<dbReference type="SMART" id="SM00299">
    <property type="entry name" value="CLH"/>
    <property type="match status" value="1"/>
</dbReference>
<dbReference type="SUPFAM" id="SSF50978">
    <property type="entry name" value="WD40 repeat-like"/>
    <property type="match status" value="1"/>
</dbReference>
<dbReference type="PROSITE" id="PS50236">
    <property type="entry name" value="CHCR"/>
    <property type="match status" value="1"/>
</dbReference>
<reference key="1">
    <citation type="journal article" date="2002" name="Nature">
        <title>The genome sequence of Schizosaccharomyces pombe.</title>
        <authorList>
            <person name="Wood V."/>
            <person name="Gwilliam R."/>
            <person name="Rajandream M.A."/>
            <person name="Lyne M.H."/>
            <person name="Lyne R."/>
            <person name="Stewart A."/>
            <person name="Sgouros J.G."/>
            <person name="Peat N."/>
            <person name="Hayles J."/>
            <person name="Baker S.G."/>
            <person name="Basham D."/>
            <person name="Bowman S."/>
            <person name="Brooks K."/>
            <person name="Brown D."/>
            <person name="Brown S."/>
            <person name="Chillingworth T."/>
            <person name="Churcher C.M."/>
            <person name="Collins M."/>
            <person name="Connor R."/>
            <person name="Cronin A."/>
            <person name="Davis P."/>
            <person name="Feltwell T."/>
            <person name="Fraser A."/>
            <person name="Gentles S."/>
            <person name="Goble A."/>
            <person name="Hamlin N."/>
            <person name="Harris D.E."/>
            <person name="Hidalgo J."/>
            <person name="Hodgson G."/>
            <person name="Holroyd S."/>
            <person name="Hornsby T."/>
            <person name="Howarth S."/>
            <person name="Huckle E.J."/>
            <person name="Hunt S."/>
            <person name="Jagels K."/>
            <person name="James K.D."/>
            <person name="Jones L."/>
            <person name="Jones M."/>
            <person name="Leather S."/>
            <person name="McDonald S."/>
            <person name="McLean J."/>
            <person name="Mooney P."/>
            <person name="Moule S."/>
            <person name="Mungall K.L."/>
            <person name="Murphy L.D."/>
            <person name="Niblett D."/>
            <person name="Odell C."/>
            <person name="Oliver K."/>
            <person name="O'Neil S."/>
            <person name="Pearson D."/>
            <person name="Quail M.A."/>
            <person name="Rabbinowitsch E."/>
            <person name="Rutherford K.M."/>
            <person name="Rutter S."/>
            <person name="Saunders D."/>
            <person name="Seeger K."/>
            <person name="Sharp S."/>
            <person name="Skelton J."/>
            <person name="Simmonds M.N."/>
            <person name="Squares R."/>
            <person name="Squares S."/>
            <person name="Stevens K."/>
            <person name="Taylor K."/>
            <person name="Taylor R.G."/>
            <person name="Tivey A."/>
            <person name="Walsh S.V."/>
            <person name="Warren T."/>
            <person name="Whitehead S."/>
            <person name="Woodward J.R."/>
            <person name="Volckaert G."/>
            <person name="Aert R."/>
            <person name="Robben J."/>
            <person name="Grymonprez B."/>
            <person name="Weltjens I."/>
            <person name="Vanstreels E."/>
            <person name="Rieger M."/>
            <person name="Schaefer M."/>
            <person name="Mueller-Auer S."/>
            <person name="Gabel C."/>
            <person name="Fuchs M."/>
            <person name="Duesterhoeft A."/>
            <person name="Fritzc C."/>
            <person name="Holzer E."/>
            <person name="Moestl D."/>
            <person name="Hilbert H."/>
            <person name="Borzym K."/>
            <person name="Langer I."/>
            <person name="Beck A."/>
            <person name="Lehrach H."/>
            <person name="Reinhardt R."/>
            <person name="Pohl T.M."/>
            <person name="Eger P."/>
            <person name="Zimmermann W."/>
            <person name="Wedler H."/>
            <person name="Wambutt R."/>
            <person name="Purnelle B."/>
            <person name="Goffeau A."/>
            <person name="Cadieu E."/>
            <person name="Dreano S."/>
            <person name="Gloux S."/>
            <person name="Lelaure V."/>
            <person name="Mottier S."/>
            <person name="Galibert F."/>
            <person name="Aves S.J."/>
            <person name="Xiang Z."/>
            <person name="Hunt C."/>
            <person name="Moore K."/>
            <person name="Hurst S.M."/>
            <person name="Lucas M."/>
            <person name="Rochet M."/>
            <person name="Gaillardin C."/>
            <person name="Tallada V.A."/>
            <person name="Garzon A."/>
            <person name="Thode G."/>
            <person name="Daga R.R."/>
            <person name="Cruzado L."/>
            <person name="Jimenez J."/>
            <person name="Sanchez M."/>
            <person name="del Rey F."/>
            <person name="Benito J."/>
            <person name="Dominguez A."/>
            <person name="Revuelta J.L."/>
            <person name="Moreno S."/>
            <person name="Armstrong J."/>
            <person name="Forsburg S.L."/>
            <person name="Cerutti L."/>
            <person name="Lowe T."/>
            <person name="McCombie W.R."/>
            <person name="Paulsen I."/>
            <person name="Potashkin J."/>
            <person name="Shpakovski G.V."/>
            <person name="Ussery D."/>
            <person name="Barrell B.G."/>
            <person name="Nurse P."/>
        </authorList>
    </citation>
    <scope>NUCLEOTIDE SEQUENCE [LARGE SCALE GENOMIC DNA]</scope>
    <source>
        <strain>972 / ATCC 24843</strain>
    </source>
</reference>
<reference key="2">
    <citation type="journal article" date="2011" name="Science">
        <title>Comparative functional genomics of the fission yeasts.</title>
        <authorList>
            <person name="Rhind N."/>
            <person name="Chen Z."/>
            <person name="Yassour M."/>
            <person name="Thompson D.A."/>
            <person name="Haas B.J."/>
            <person name="Habib N."/>
            <person name="Wapinski I."/>
            <person name="Roy S."/>
            <person name="Lin M.F."/>
            <person name="Heiman D.I."/>
            <person name="Young S.K."/>
            <person name="Furuya K."/>
            <person name="Guo Y."/>
            <person name="Pidoux A."/>
            <person name="Chen H.M."/>
            <person name="Robbertse B."/>
            <person name="Goldberg J.M."/>
            <person name="Aoki K."/>
            <person name="Bayne E.H."/>
            <person name="Berlin A.M."/>
            <person name="Desjardins C.A."/>
            <person name="Dobbs E."/>
            <person name="Dukaj L."/>
            <person name="Fan L."/>
            <person name="FitzGerald M.G."/>
            <person name="French C."/>
            <person name="Gujja S."/>
            <person name="Hansen K."/>
            <person name="Keifenheim D."/>
            <person name="Levin J.Z."/>
            <person name="Mosher R.A."/>
            <person name="Mueller C.A."/>
            <person name="Pfiffner J."/>
            <person name="Priest M."/>
            <person name="Russ C."/>
            <person name="Smialowska A."/>
            <person name="Swoboda P."/>
            <person name="Sykes S.M."/>
            <person name="Vaughn M."/>
            <person name="Vengrova S."/>
            <person name="Yoder R."/>
            <person name="Zeng Q."/>
            <person name="Allshire R."/>
            <person name="Baulcombe D."/>
            <person name="Birren B.W."/>
            <person name="Brown W."/>
            <person name="Ekwall K."/>
            <person name="Kellis M."/>
            <person name="Leatherwood J."/>
            <person name="Levin H."/>
            <person name="Margalit H."/>
            <person name="Martienssen R."/>
            <person name="Nieduszynski C.A."/>
            <person name="Spatafora J.W."/>
            <person name="Friedman N."/>
            <person name="Dalgaard J.Z."/>
            <person name="Baumann P."/>
            <person name="Niki H."/>
            <person name="Regev A."/>
            <person name="Nusbaum C."/>
        </authorList>
    </citation>
    <scope>REVISION OF GENE MODEL</scope>
</reference>
<name>VPS41_SCHPO</name>
<gene>
    <name type="primary">vps41</name>
    <name type="ORF">SPAP27G11.05c</name>
</gene>
<organism>
    <name type="scientific">Schizosaccharomyces pombe (strain 972 / ATCC 24843)</name>
    <name type="common">Fission yeast</name>
    <dbReference type="NCBI Taxonomy" id="284812"/>
    <lineage>
        <taxon>Eukaryota</taxon>
        <taxon>Fungi</taxon>
        <taxon>Dikarya</taxon>
        <taxon>Ascomycota</taxon>
        <taxon>Taphrinomycotina</taxon>
        <taxon>Schizosaccharomycetes</taxon>
        <taxon>Schizosaccharomycetales</taxon>
        <taxon>Schizosaccharomycetaceae</taxon>
        <taxon>Schizosaccharomyces</taxon>
    </lineage>
</organism>
<feature type="chain" id="PRO_0000314101" description="Vacuolar protein sorting-associated protein 41">
    <location>
        <begin position="1"/>
        <end position="871"/>
    </location>
</feature>
<feature type="repeat" description="WD 1">
    <location>
        <begin position="39"/>
        <end position="76"/>
    </location>
</feature>
<feature type="repeat" description="WD 2">
    <location>
        <begin position="78"/>
        <end position="117"/>
    </location>
</feature>
<feature type="repeat" description="WD 3">
    <location>
        <begin position="119"/>
        <end position="162"/>
    </location>
</feature>
<feature type="repeat" description="WD 4">
    <location>
        <begin position="166"/>
        <end position="204"/>
    </location>
</feature>
<feature type="repeat" description="CHCR">
    <location>
        <begin position="575"/>
        <end position="716"/>
    </location>
</feature>
<feature type="region of interest" description="Disordered" evidence="2">
    <location>
        <begin position="1"/>
        <end position="23"/>
    </location>
</feature>
<evidence type="ECO:0000250" key="1"/>
<evidence type="ECO:0000256" key="2">
    <source>
        <dbReference type="SAM" id="MobiDB-lite"/>
    </source>
</evidence>
<evidence type="ECO:0000305" key="3"/>
<sequence length="871" mass="100267">MSVDESNSDSEIDSISSSDEDEEPKLIYERITEKFQGCFMNDTISACAISKEHFFFGSHNGAIYIYQKNGILLRKMILHSASVVDLSVDLESENLASCSMDGKMIISNITTRETTVHDFKRPLLSVAIDPYYSTRSSRQVLSGGRAGKVVLSEKGWLGNKDTVLQADCGAVYKISWYTTYIAWASDLGITVYSTEFGKVLGRLEPPKRLPNDEIFPYQLFWQSESRLVIGWSDQIMIVSIQRSNVANELPKISLQALLEIDSIVSGVLMLGFNILTLAYIANVEDFTSAIPSQRIEGCRPELRLIDSSFKELCGDAIGLANYSRLQPSDYHLLPDPSSNSHSFVISPNDIVYVRERNQIDHVKYLVSKEMYAEAIDAVKKLPEIPPSLQISELAKKYIFHLLGKGQYKEAGMVIPSLYNDNLAEWEQWVFVFAENDHLEDIADFLPTGENHLSPLVYEMILAQYLATDERTFNKKLHEWPTMLYSVSTIRNATLKKFKENQKSSTLTESLAFLYLEDNMPIDAFHLYLKLHSELCIDLILQHNLYDEARASVLLLMLISSKGKSSDTKSAMSSMLVQHVHSFPPQEVIMQIHSVPQFLYEYFCEFELMYPNSLMEYGDLKLDVFAEFDRKRFFDFLVNTQCYSLDHAAQICKQYNYLDELVYILGRMGNNKEALMLIINELLDIGRAIRYVKEQADRELWDDLISYSLDKPEFICTLLENIGTDENARNLLSKIPPGTKLPHMKKSISKLLADHQSQVQLYQSCYKLFKNESISMAIKYREQEQSGLEFLVKDNPFNSFGDEQLDYNYRKRIPMIYDLRTKKYIRPEDVRIDTDDVFKDDKIAYFKTRMHLKPEVQMRNKLDLLMMLYKQT</sequence>
<comment type="function">
    <text evidence="1">Required for vacuolar assembly and vacuolar traffic.</text>
</comment>
<comment type="similarity">
    <text evidence="3">Belongs to the VPS41 family.</text>
</comment>
<proteinExistence type="inferred from homology"/>